<protein>
    <recommendedName>
        <fullName evidence="1">Imidazole glycerol phosphate synthase subunit HisF</fullName>
        <ecNumber evidence="1">4.3.2.10</ecNumber>
    </recommendedName>
    <alternativeName>
        <fullName evidence="1">IGP synthase cyclase subunit</fullName>
    </alternativeName>
    <alternativeName>
        <fullName evidence="1">IGP synthase subunit HisF</fullName>
    </alternativeName>
    <alternativeName>
        <fullName evidence="1">ImGP synthase subunit HisF</fullName>
        <shortName evidence="1">IGPS subunit HisF</shortName>
    </alternativeName>
</protein>
<feature type="chain" id="PRO_0000230136" description="Imidazole glycerol phosphate synthase subunit HisF">
    <location>
        <begin position="1"/>
        <end position="257"/>
    </location>
</feature>
<feature type="active site" evidence="1">
    <location>
        <position position="12"/>
    </location>
</feature>
<feature type="active site" evidence="1">
    <location>
        <position position="131"/>
    </location>
</feature>
<reference key="1">
    <citation type="journal article" date="2006" name="PLoS Biol.">
        <title>The genome of deep-sea vent chemolithoautotroph Thiomicrospira crunogena XCL-2.</title>
        <authorList>
            <person name="Scott K.M."/>
            <person name="Sievert S.M."/>
            <person name="Abril F.N."/>
            <person name="Ball L.A."/>
            <person name="Barrett C.J."/>
            <person name="Blake R.A."/>
            <person name="Boller A.J."/>
            <person name="Chain P.S.G."/>
            <person name="Clark J.A."/>
            <person name="Davis C.R."/>
            <person name="Detter C."/>
            <person name="Do K.F."/>
            <person name="Dobrinski K.P."/>
            <person name="Faza B.I."/>
            <person name="Fitzpatrick K.A."/>
            <person name="Freyermuth S.K."/>
            <person name="Harmer T.L."/>
            <person name="Hauser L.J."/>
            <person name="Huegler M."/>
            <person name="Kerfeld C.A."/>
            <person name="Klotz M.G."/>
            <person name="Kong W.W."/>
            <person name="Land M."/>
            <person name="Lapidus A."/>
            <person name="Larimer F.W."/>
            <person name="Longo D.L."/>
            <person name="Lucas S."/>
            <person name="Malfatti S.A."/>
            <person name="Massey S.E."/>
            <person name="Martin D.D."/>
            <person name="McCuddin Z."/>
            <person name="Meyer F."/>
            <person name="Moore J.L."/>
            <person name="Ocampo L.H. Jr."/>
            <person name="Paul J.H."/>
            <person name="Paulsen I.T."/>
            <person name="Reep D.K."/>
            <person name="Ren Q."/>
            <person name="Ross R.L."/>
            <person name="Sato P.Y."/>
            <person name="Thomas P."/>
            <person name="Tinkham L.E."/>
            <person name="Zeruth G.T."/>
        </authorList>
    </citation>
    <scope>NUCLEOTIDE SEQUENCE [LARGE SCALE GENOMIC DNA]</scope>
    <source>
        <strain>DSM 25203 / XCL-2</strain>
    </source>
</reference>
<sequence length="257" mass="27493">MSLAKRIIPCLDVDNGRVVKGVQFVDIRDAGDPVEVAKRYDEQGADEITFLDITATAHERDTIVHVVEEVASQVFIPLTVGGGIRSIEDVRTMLNAGADKVAINSAAIFNPAFVKEACDTFGSQCIVVAIDAKKVSPKGEPDKWEIFTHGGRKETGIDAVEWAKEMETLGAGELLVTSMDKDGTKSGFDLALTRTISDSVKIPVIASGGVGKLSDLCDGITQGHAEAVLAASIFHFGEHTVQEAKQAMQKEGIEVRL</sequence>
<name>HIS6_HYDCU</name>
<organism>
    <name type="scientific">Hydrogenovibrio crunogenus (strain DSM 25203 / XCL-2)</name>
    <name type="common">Thiomicrospira crunogena</name>
    <dbReference type="NCBI Taxonomy" id="317025"/>
    <lineage>
        <taxon>Bacteria</taxon>
        <taxon>Pseudomonadati</taxon>
        <taxon>Pseudomonadota</taxon>
        <taxon>Gammaproteobacteria</taxon>
        <taxon>Thiotrichales</taxon>
        <taxon>Piscirickettsiaceae</taxon>
        <taxon>Hydrogenovibrio</taxon>
    </lineage>
</organism>
<accession>Q31E64</accession>
<evidence type="ECO:0000255" key="1">
    <source>
        <dbReference type="HAMAP-Rule" id="MF_01013"/>
    </source>
</evidence>
<proteinExistence type="inferred from homology"/>
<gene>
    <name evidence="1" type="primary">hisF</name>
    <name type="ordered locus">Tcr_1969</name>
</gene>
<comment type="function">
    <text evidence="1">IGPS catalyzes the conversion of PRFAR and glutamine to IGP, AICAR and glutamate. The HisF subunit catalyzes the cyclization activity that produces IGP and AICAR from PRFAR using the ammonia provided by the HisH subunit.</text>
</comment>
<comment type="catalytic activity">
    <reaction evidence="1">
        <text>5-[(5-phospho-1-deoxy-D-ribulos-1-ylimino)methylamino]-1-(5-phospho-beta-D-ribosyl)imidazole-4-carboxamide + L-glutamine = D-erythro-1-(imidazol-4-yl)glycerol 3-phosphate + 5-amino-1-(5-phospho-beta-D-ribosyl)imidazole-4-carboxamide + L-glutamate + H(+)</text>
        <dbReference type="Rhea" id="RHEA:24793"/>
        <dbReference type="ChEBI" id="CHEBI:15378"/>
        <dbReference type="ChEBI" id="CHEBI:29985"/>
        <dbReference type="ChEBI" id="CHEBI:58278"/>
        <dbReference type="ChEBI" id="CHEBI:58359"/>
        <dbReference type="ChEBI" id="CHEBI:58475"/>
        <dbReference type="ChEBI" id="CHEBI:58525"/>
        <dbReference type="EC" id="4.3.2.10"/>
    </reaction>
</comment>
<comment type="pathway">
    <text evidence="1">Amino-acid biosynthesis; L-histidine biosynthesis; L-histidine from 5-phospho-alpha-D-ribose 1-diphosphate: step 5/9.</text>
</comment>
<comment type="subunit">
    <text evidence="1">Heterodimer of HisH and HisF.</text>
</comment>
<comment type="subcellular location">
    <subcellularLocation>
        <location evidence="1">Cytoplasm</location>
    </subcellularLocation>
</comment>
<comment type="similarity">
    <text evidence="1">Belongs to the HisA/HisF family.</text>
</comment>
<dbReference type="EC" id="4.3.2.10" evidence="1"/>
<dbReference type="EMBL" id="CP000109">
    <property type="protein sequence ID" value="ABB42559.1"/>
    <property type="molecule type" value="Genomic_DNA"/>
</dbReference>
<dbReference type="SMR" id="Q31E64"/>
<dbReference type="STRING" id="317025.Tcr_1969"/>
<dbReference type="KEGG" id="tcx:Tcr_1969"/>
<dbReference type="eggNOG" id="COG0107">
    <property type="taxonomic scope" value="Bacteria"/>
</dbReference>
<dbReference type="HOGENOM" id="CLU_048577_4_0_6"/>
<dbReference type="OrthoDB" id="9781903at2"/>
<dbReference type="UniPathway" id="UPA00031">
    <property type="reaction ID" value="UER00010"/>
</dbReference>
<dbReference type="GO" id="GO:0005737">
    <property type="term" value="C:cytoplasm"/>
    <property type="evidence" value="ECO:0007669"/>
    <property type="project" value="UniProtKB-SubCell"/>
</dbReference>
<dbReference type="GO" id="GO:0000107">
    <property type="term" value="F:imidazoleglycerol-phosphate synthase activity"/>
    <property type="evidence" value="ECO:0007669"/>
    <property type="project" value="UniProtKB-UniRule"/>
</dbReference>
<dbReference type="GO" id="GO:0016829">
    <property type="term" value="F:lyase activity"/>
    <property type="evidence" value="ECO:0007669"/>
    <property type="project" value="UniProtKB-KW"/>
</dbReference>
<dbReference type="GO" id="GO:0000105">
    <property type="term" value="P:L-histidine biosynthetic process"/>
    <property type="evidence" value="ECO:0007669"/>
    <property type="project" value="UniProtKB-UniRule"/>
</dbReference>
<dbReference type="CDD" id="cd04731">
    <property type="entry name" value="HisF"/>
    <property type="match status" value="1"/>
</dbReference>
<dbReference type="FunFam" id="3.20.20.70:FF:000006">
    <property type="entry name" value="Imidazole glycerol phosphate synthase subunit HisF"/>
    <property type="match status" value="1"/>
</dbReference>
<dbReference type="Gene3D" id="3.20.20.70">
    <property type="entry name" value="Aldolase class I"/>
    <property type="match status" value="1"/>
</dbReference>
<dbReference type="HAMAP" id="MF_01013">
    <property type="entry name" value="HisF"/>
    <property type="match status" value="1"/>
</dbReference>
<dbReference type="InterPro" id="IPR013785">
    <property type="entry name" value="Aldolase_TIM"/>
</dbReference>
<dbReference type="InterPro" id="IPR006062">
    <property type="entry name" value="His_biosynth"/>
</dbReference>
<dbReference type="InterPro" id="IPR004651">
    <property type="entry name" value="HisF"/>
</dbReference>
<dbReference type="InterPro" id="IPR050064">
    <property type="entry name" value="IGPS_HisA/HisF"/>
</dbReference>
<dbReference type="InterPro" id="IPR011060">
    <property type="entry name" value="RibuloseP-bd_barrel"/>
</dbReference>
<dbReference type="NCBIfam" id="TIGR00735">
    <property type="entry name" value="hisF"/>
    <property type="match status" value="1"/>
</dbReference>
<dbReference type="PANTHER" id="PTHR21235:SF2">
    <property type="entry name" value="IMIDAZOLE GLYCEROL PHOSPHATE SYNTHASE HISHF"/>
    <property type="match status" value="1"/>
</dbReference>
<dbReference type="PANTHER" id="PTHR21235">
    <property type="entry name" value="IMIDAZOLE GLYCEROL PHOSPHATE SYNTHASE SUBUNIT HISF/H IGP SYNTHASE SUBUNIT HISF/H"/>
    <property type="match status" value="1"/>
</dbReference>
<dbReference type="Pfam" id="PF00977">
    <property type="entry name" value="His_biosynth"/>
    <property type="match status" value="1"/>
</dbReference>
<dbReference type="SUPFAM" id="SSF51366">
    <property type="entry name" value="Ribulose-phoshate binding barrel"/>
    <property type="match status" value="1"/>
</dbReference>
<keyword id="KW-0028">Amino-acid biosynthesis</keyword>
<keyword id="KW-0963">Cytoplasm</keyword>
<keyword id="KW-0368">Histidine biosynthesis</keyword>
<keyword id="KW-0456">Lyase</keyword>